<gene>
    <name evidence="6" type="ORF">GL50803_0015106</name>
    <name evidence="5" type="ORF">GL50803_15106</name>
</gene>
<proteinExistence type="inferred from homology"/>
<dbReference type="EMBL" id="AACB02000007">
    <property type="protein sequence ID" value="EDO80774.1"/>
    <property type="molecule type" value="Genomic_DNA"/>
</dbReference>
<dbReference type="EMBL" id="AACB03000001">
    <property type="protein sequence ID" value="KAE8306154.1"/>
    <property type="molecule type" value="Genomic_DNA"/>
</dbReference>
<dbReference type="RefSeq" id="XP_001708448.1">
    <property type="nucleotide sequence ID" value="XM_001708396.1"/>
</dbReference>
<dbReference type="SMR" id="A8B9C0"/>
<dbReference type="STRING" id="184922.A8B9C0"/>
<dbReference type="EnsemblProtists" id="EDO80774">
    <property type="protein sequence ID" value="EDO80774"/>
    <property type="gene ID" value="GL50803_15106"/>
</dbReference>
<dbReference type="GeneID" id="5701362"/>
<dbReference type="KEGG" id="gla:GL50803_0015106"/>
<dbReference type="VEuPathDB" id="GiardiaDB:GL50803_15106"/>
<dbReference type="HOGENOM" id="CLU_276527_0_0_1"/>
<dbReference type="InParanoid" id="A8B9C0"/>
<dbReference type="OMA" id="HHISIVE"/>
<dbReference type="Proteomes" id="UP000001548">
    <property type="component" value="Chromosome 5"/>
</dbReference>
<dbReference type="GO" id="GO:0005737">
    <property type="term" value="C:cytoplasm"/>
    <property type="evidence" value="ECO:0000314"/>
    <property type="project" value="UniProtKB"/>
</dbReference>
<dbReference type="GO" id="GO:0005641">
    <property type="term" value="C:nuclear envelope lumen"/>
    <property type="evidence" value="ECO:0000314"/>
    <property type="project" value="UniProtKB"/>
</dbReference>
<dbReference type="GO" id="GO:0005634">
    <property type="term" value="C:nucleus"/>
    <property type="evidence" value="ECO:0000314"/>
    <property type="project" value="UniProtKB"/>
</dbReference>
<dbReference type="GO" id="GO:0061608">
    <property type="term" value="F:nuclear import signal receptor activity"/>
    <property type="evidence" value="ECO:0000318"/>
    <property type="project" value="GO_Central"/>
</dbReference>
<dbReference type="GO" id="GO:0008139">
    <property type="term" value="F:nuclear localization sequence binding"/>
    <property type="evidence" value="ECO:0000318"/>
    <property type="project" value="GO_Central"/>
</dbReference>
<dbReference type="GO" id="GO:0010628">
    <property type="term" value="P:positive regulation of gene expression"/>
    <property type="evidence" value="ECO:0000270"/>
    <property type="project" value="UniProtKB"/>
</dbReference>
<dbReference type="GO" id="GO:0006606">
    <property type="term" value="P:protein import into nucleus"/>
    <property type="evidence" value="ECO:0000318"/>
    <property type="project" value="GO_Central"/>
</dbReference>
<dbReference type="FunFam" id="1.25.10.10:FF:001038">
    <property type="entry name" value="Importin beta-3 subunit"/>
    <property type="match status" value="1"/>
</dbReference>
<dbReference type="Gene3D" id="1.25.10.10">
    <property type="entry name" value="Leucine-rich Repeat Variant"/>
    <property type="match status" value="1"/>
</dbReference>
<dbReference type="InterPro" id="IPR011989">
    <property type="entry name" value="ARM-like"/>
</dbReference>
<dbReference type="InterPro" id="IPR016024">
    <property type="entry name" value="ARM-type_fold"/>
</dbReference>
<dbReference type="InterPro" id="IPR000357">
    <property type="entry name" value="HEAT"/>
</dbReference>
<dbReference type="InterPro" id="IPR040122">
    <property type="entry name" value="Importin_beta"/>
</dbReference>
<dbReference type="PANTHER" id="PTHR10527">
    <property type="entry name" value="IMPORTIN BETA"/>
    <property type="match status" value="1"/>
</dbReference>
<dbReference type="Pfam" id="PF02985">
    <property type="entry name" value="HEAT"/>
    <property type="match status" value="1"/>
</dbReference>
<dbReference type="SUPFAM" id="SSF48371">
    <property type="entry name" value="ARM repeat"/>
    <property type="match status" value="2"/>
</dbReference>
<keyword id="KW-0963">Cytoplasm</keyword>
<keyword id="KW-0539">Nucleus</keyword>
<keyword id="KW-0653">Protein transport</keyword>
<keyword id="KW-1185">Reference proteome</keyword>
<keyword id="KW-0677">Repeat</keyword>
<keyword id="KW-0813">Transport</keyword>
<protein>
    <recommendedName>
        <fullName evidence="2">Importin beta</fullName>
        <shortName evidence="2">Imp beta</shortName>
    </recommendedName>
    <alternativeName>
        <fullName evidence="2">Glimp beta</fullName>
    </alternativeName>
    <alternativeName>
        <fullName evidence="2">Karyopherin beta</fullName>
    </alternativeName>
</protein>
<name>IMPB_GIAIC</name>
<sequence>MDLASFQNLLQQCQTEQDTQKRKEVEDFYFKYKQEEPASYVANIIEVICSNSSSSNYAAILFRRDMEQSGDVAAVYRAGNGNPECVHEVMVRILNTMLGQTSSNSIRFLSEILGVHLERILESDPQGGVAQFPEFFQALETHFAAPTTTSQLRVGFLNCIKYICGLAYTSVTKIGGKAIIDLIFAGLEDQADTVAVAAIKCVNALILYGDSDDEDEKNDSVIPNSVLQQFVYKIIQRLPAMIGRHNFMDAEQALEQLVDIADMNGAVLKPMVKDVHILVTGILSPPEIDDSLKRLTIVLFSYLCENISDIRKRAKKAISEIISQFIFPYCGLFDDTLTQAWLTSEDPHHFDDQNSLLGYAESALDRISTTLGYKVIFPLIKDFVSYAKANPTVHNCFAVANIFTITAEGLARLVTKEDIVFTIDTLLELSNHPHQRVRYSVLSAIGQLSEDYAPTFQTFHEKVMPLLTKMAQDPCIAVAAHSLGALVNFLEHLKKAETYLYKDALEPVITMHLMQSNHLLSNTNSLALVASLSNTLLKNDFADMCKNYIPHILGMFTNVMETLRKSPNMSLNKPRLSYISRILECLSIVAGTLPQLFAPHIDPLLTAIMELFNFSIDDAESSLLKYTLIAVSRIVDIYPETFPKYMDPIIAKLNDIFNLKYIEFDNVNEFAVTDDDDCSFTISPHVLQLQAVGFDVISGIMRKTPAAFAPHLDAFLTKIQDRSFHTGSISESLKLNSIECICTAFRVAVAAPTVASPPAVHQRAFTMLIAATESNIDDIDIYQSIADSMAEYVMDYCKYITSTKDMTSYTETVNKVFSLLENFEDQCRKLLEVSIQDLECDDDLDPEETATMVSDTVDDFSDAIATFADVYGTFAEALGDLSLDFMSPLLMPVIKRWVNYYTSTKKNGISGAQVAFLTSAVSILADIVKYLSPANSKSLVEPFVTIIIENTKLNKEWVEINQVCCYTAGLLFEKYEGDPGLAILIPTLLANATELIGVVKSGELVSKEALAAYDNAVTLSARMAQAFPTELGNMSGGLTQFWASWLDLASTVQTDREEVIASIQLIISAFARNDPNFMSGNLVHALYAFLSLYFGDHHISIVEDQTNANLIEGANTVLTQIAGHGTILADTIAKCSEYVQKTYSLYTSVRQ</sequence>
<reference evidence="5 7" key="1">
    <citation type="journal article" date="2007" name="Science">
        <title>Genomic minimalism in the early diverging intestinal parasite Giardia lamblia.</title>
        <authorList>
            <person name="Morrison H.G."/>
            <person name="McArthur A.G."/>
            <person name="Gillin F.D."/>
            <person name="Aley S.B."/>
            <person name="Adam R.D."/>
            <person name="Olsen G.J."/>
            <person name="Best A.A."/>
            <person name="Cande W.Z."/>
            <person name="Chen F."/>
            <person name="Cipriano M.J."/>
            <person name="Davids B.J."/>
            <person name="Dawson S.C."/>
            <person name="Elmendorf H.G."/>
            <person name="Hehl A.B."/>
            <person name="Holder M.E."/>
            <person name="Huse S.M."/>
            <person name="Kim U.U."/>
            <person name="Lasek-Nesselquist E."/>
            <person name="Manning G."/>
            <person name="Nigam A."/>
            <person name="Nixon J.E.J."/>
            <person name="Palm D."/>
            <person name="Passamaneck N.E."/>
            <person name="Prabhu A."/>
            <person name="Reich C.I."/>
            <person name="Reiner D.S."/>
            <person name="Samuelson J."/>
            <person name="Svard S.G."/>
            <person name="Sogin M.L."/>
        </authorList>
    </citation>
    <scope>NUCLEOTIDE SEQUENCE [LARGE SCALE GENOMIC DNA]</scope>
    <source>
        <strain evidence="7">ATCC 50803 / WB clone C6</strain>
    </source>
</reference>
<reference evidence="6" key="2">
    <citation type="submission" date="2019-07" db="EMBL/GenBank/DDBJ databases">
        <title>New Giardia intestinalis WB genome in near-complete chromosomes.</title>
        <authorList>
            <person name="Xu F."/>
            <person name="Jex A."/>
            <person name="Svard S.G."/>
        </authorList>
    </citation>
    <scope>NUCLEOTIDE SEQUENCE [LARGE SCALE GENOMIC DNA]</scope>
    <source>
        <strain evidence="6">ATCC 50803 / WB clone C6</strain>
    </source>
</reference>
<reference key="3">
    <citation type="journal article" date="2020" name="Biochim. Biophys. Acta">
        <title>Evidence of nuclear transport mechanisms in the protozoan parasite Giardia lamblia.</title>
        <authorList>
            <person name="Mayol G.F."/>
            <person name="Revuelta M.V."/>
            <person name="Salusso A."/>
            <person name="Touz M.C."/>
            <person name="Ropolo A.S."/>
        </authorList>
    </citation>
    <scope>FUNCTION</scope>
    <scope>SUBCELLULAR LOCATION</scope>
    <scope>LACK OF IBN DOMAIN</scope>
    <scope>HEAT REPEATS</scope>
    <scope>3D-STRUCTURE MODELING</scope>
    <source>
        <strain evidence="2">WB1267</strain>
    </source>
</reference>
<organism evidence="5">
    <name type="scientific">Giardia intestinalis (strain ATCC 50803 / WB clone C6)</name>
    <name type="common">Giardia lamblia</name>
    <dbReference type="NCBI Taxonomy" id="184922"/>
    <lineage>
        <taxon>Eukaryota</taxon>
        <taxon>Metamonada</taxon>
        <taxon>Diplomonadida</taxon>
        <taxon>Hexamitidae</taxon>
        <taxon>Giardiinae</taxon>
        <taxon>Giardia</taxon>
    </lineage>
</organism>
<accession>A8B9C0</accession>
<feature type="chain" id="PRO_0000459075" description="Importin beta">
    <location>
        <begin position="1"/>
        <end position="1151"/>
    </location>
</feature>
<feature type="repeat" description="HEAT 1" evidence="4">
    <location>
        <begin position="1"/>
        <end position="36"/>
    </location>
</feature>
<feature type="repeat" description="HEAT 2" evidence="4">
    <location>
        <begin position="37"/>
        <end position="82"/>
    </location>
</feature>
<feature type="repeat" description="HEAT 3" evidence="4">
    <location>
        <begin position="83"/>
        <end position="132"/>
    </location>
</feature>
<feature type="repeat" description="HEAT 4" evidence="4">
    <location>
        <begin position="133"/>
        <end position="175"/>
    </location>
</feature>
<feature type="repeat" description="HEAT 5" evidence="4">
    <location>
        <begin position="176"/>
        <end position="222"/>
    </location>
</feature>
<feature type="repeat" description="HEAT 6" evidence="4">
    <location>
        <begin position="223"/>
        <end position="269"/>
    </location>
</feature>
<feature type="repeat" description="HEAT 7" evidence="4">
    <location>
        <begin position="270"/>
        <end position="316"/>
    </location>
</feature>
<feature type="repeat" description="HEAT 8" evidence="4">
    <location>
        <begin position="317"/>
        <end position="377"/>
    </location>
</feature>
<feature type="repeat" description="HEAT 9" evidence="4">
    <location>
        <begin position="378"/>
        <end position="416"/>
    </location>
</feature>
<feature type="repeat" description="HEAT 10" evidence="4">
    <location>
        <begin position="417"/>
        <end position="453"/>
    </location>
</feature>
<feature type="repeat" description="HEAT 11" evidence="4">
    <location>
        <begin position="454"/>
        <end position="495"/>
    </location>
</feature>
<feature type="repeat" description="HEAT 12" evidence="4">
    <location>
        <begin position="496"/>
        <end position="540"/>
    </location>
</feature>
<feature type="repeat" description="HEAT 13" evidence="4">
    <location>
        <begin position="541"/>
        <end position="593"/>
    </location>
</feature>
<feature type="repeat" description="HEAT 14" evidence="4">
    <location>
        <begin position="594"/>
        <end position="642"/>
    </location>
</feature>
<feature type="repeat" description="HEAT 15" evidence="4">
    <location>
        <begin position="643"/>
        <end position="704"/>
    </location>
</feature>
<feature type="repeat" description="HEAT 16" evidence="4">
    <location>
        <begin position="705"/>
        <end position="756"/>
    </location>
</feature>
<feature type="repeat" description="HEAT 17" evidence="4">
    <location>
        <begin position="757"/>
        <end position="811"/>
    </location>
</feature>
<feature type="repeat" description="HEAT 18" evidence="4">
    <location>
        <begin position="812"/>
        <end position="880"/>
    </location>
</feature>
<feature type="repeat" description="HEAT 19" evidence="4">
    <location>
        <begin position="881"/>
        <end position="932"/>
    </location>
</feature>
<feature type="repeat" description="HEAT 20" evidence="4">
    <location>
        <begin position="933"/>
        <end position="978"/>
    </location>
</feature>
<feature type="repeat" description="HEAT 21" evidence="4">
    <location>
        <begin position="979"/>
        <end position="1027"/>
    </location>
</feature>
<feature type="repeat" description="HEAT 22" evidence="4">
    <location>
        <begin position="1028"/>
        <end position="1074"/>
    </location>
</feature>
<feature type="repeat" description="HEAT 23" evidence="4">
    <location>
        <begin position="1075"/>
        <end position="1120"/>
    </location>
</feature>
<feature type="repeat" description="HEAT 24" evidence="4">
    <location>
        <begin position="1121"/>
        <end position="1151"/>
    </location>
</feature>
<comment type="function">
    <text evidence="1 3">Functions in nuclear protein import as nuclear transport receptor (Probable). Involved in encystation process (PubMed:31672613). Constitutive expression enhances cyst production and increases transcription of endogenous genes involved in encystation (PubMed:31672613). Level of mRNA of the transcriptional factor myb1-like protein increases in early stages of the encystation process followed by increased mRNAs of the cyst wall proteins cwp1-3 (PubMed:31672613).</text>
</comment>
<comment type="subcellular location">
    <subcellularLocation>
        <location evidence="1">Nucleus intermembrane space</location>
    </subcellularLocation>
    <subcellularLocation>
        <location evidence="1">Cytoplasm</location>
    </subcellularLocation>
    <subcellularLocation>
        <location evidence="1">Nucleus</location>
    </subcellularLocation>
    <text evidence="1">Localizes to the nucleus intermembrane space in trophozoites, but relocalizes to cytoplasm and inside nuclei during encystation (PubMed:31672613). Colocalizes with arginine deiminase (ADI) inside the nuclei at late encystation stage (PubMed:31672613).</text>
</comment>
<comment type="domain">
    <text evidence="4">Lacks the importin beta N-terminal (IBN) domain.</text>
</comment>
<comment type="similarity">
    <text evidence="3">Belongs to the importin beta family.</text>
</comment>
<evidence type="ECO:0000269" key="1">
    <source>
    </source>
</evidence>
<evidence type="ECO:0000303" key="2">
    <source>
    </source>
</evidence>
<evidence type="ECO:0000305" key="3"/>
<evidence type="ECO:0000305" key="4">
    <source>
    </source>
</evidence>
<evidence type="ECO:0000312" key="5">
    <source>
        <dbReference type="EMBL" id="EDO80774.1"/>
    </source>
</evidence>
<evidence type="ECO:0000312" key="6">
    <source>
        <dbReference type="EMBL" id="KAE8306154.1"/>
    </source>
</evidence>
<evidence type="ECO:0000312" key="7">
    <source>
        <dbReference type="Proteomes" id="UP000001548"/>
    </source>
</evidence>